<accession>Q1KTF2</accession>
<accession>F9XLR5</accession>
<evidence type="ECO:0000250" key="1"/>
<evidence type="ECO:0000250" key="2">
    <source>
        <dbReference type="UniProtKB" id="P32485"/>
    </source>
</evidence>
<evidence type="ECO:0000250" key="3">
    <source>
        <dbReference type="UniProtKB" id="Q16539"/>
    </source>
</evidence>
<evidence type="ECO:0000250" key="4">
    <source>
        <dbReference type="UniProtKB" id="Q4WSF6"/>
    </source>
</evidence>
<evidence type="ECO:0000255" key="5">
    <source>
        <dbReference type="PROSITE-ProRule" id="PRU00159"/>
    </source>
</evidence>
<evidence type="ECO:0000255" key="6">
    <source>
        <dbReference type="PROSITE-ProRule" id="PRU10027"/>
    </source>
</evidence>
<evidence type="ECO:0000269" key="7">
    <source>
    </source>
</evidence>
<proteinExistence type="inferred from homology"/>
<name>HOG1_ZYMTI</name>
<comment type="function">
    <text evidence="4 7">Proline-directed serine/threonine-protein kinase involved in a signal transduction pathway that is activated by changes in the osmolarity of the extracellular environment. Controls osmotic regulation of transcription of target genes (By similarity).</text>
</comment>
<comment type="catalytic activity">
    <reaction evidence="2">
        <text>L-seryl-[protein] + ATP = O-phospho-L-seryl-[protein] + ADP + H(+)</text>
        <dbReference type="Rhea" id="RHEA:17989"/>
        <dbReference type="Rhea" id="RHEA-COMP:9863"/>
        <dbReference type="Rhea" id="RHEA-COMP:11604"/>
        <dbReference type="ChEBI" id="CHEBI:15378"/>
        <dbReference type="ChEBI" id="CHEBI:29999"/>
        <dbReference type="ChEBI" id="CHEBI:30616"/>
        <dbReference type="ChEBI" id="CHEBI:83421"/>
        <dbReference type="ChEBI" id="CHEBI:456216"/>
        <dbReference type="EC" id="2.7.11.24"/>
    </reaction>
    <physiologicalReaction direction="left-to-right" evidence="2">
        <dbReference type="Rhea" id="RHEA:17990"/>
    </physiologicalReaction>
</comment>
<comment type="catalytic activity">
    <reaction evidence="2">
        <text>L-threonyl-[protein] + ATP = O-phospho-L-threonyl-[protein] + ADP + H(+)</text>
        <dbReference type="Rhea" id="RHEA:46608"/>
        <dbReference type="Rhea" id="RHEA-COMP:11060"/>
        <dbReference type="Rhea" id="RHEA-COMP:11605"/>
        <dbReference type="ChEBI" id="CHEBI:15378"/>
        <dbReference type="ChEBI" id="CHEBI:30013"/>
        <dbReference type="ChEBI" id="CHEBI:30616"/>
        <dbReference type="ChEBI" id="CHEBI:61977"/>
        <dbReference type="ChEBI" id="CHEBI:456216"/>
        <dbReference type="EC" id="2.7.11.24"/>
    </reaction>
    <physiologicalReaction direction="left-to-right" evidence="2">
        <dbReference type="Rhea" id="RHEA:46609"/>
    </physiologicalReaction>
</comment>
<comment type="cofactor">
    <cofactor evidence="3">
        <name>Mg(2+)</name>
        <dbReference type="ChEBI" id="CHEBI:18420"/>
    </cofactor>
</comment>
<comment type="activity regulation">
    <text evidence="1">Activated by tyrosine and threonine phosphorylation.</text>
</comment>
<comment type="subcellular location">
    <subcellularLocation>
        <location evidence="1">Cytoplasm</location>
    </subcellularLocation>
    <subcellularLocation>
        <location evidence="1">Nucleus</location>
    </subcellularLocation>
</comment>
<comment type="domain">
    <text>The TXY motif contains the threonine and tyrosine residues whose phosphorylation activates the MAP kinases.</text>
</comment>
<comment type="PTM">
    <text evidence="1">Dually phosphorylated on Thr-171 and Tyr-173, which activates the enzyme.</text>
</comment>
<comment type="similarity">
    <text evidence="5">Belongs to the protein kinase superfamily. Ser/Thr protein kinase family. MAP kinase subfamily. HOG1 sub-subfamily.</text>
</comment>
<keyword id="KW-0010">Activator</keyword>
<keyword id="KW-0067">ATP-binding</keyword>
<keyword id="KW-0963">Cytoplasm</keyword>
<keyword id="KW-0418">Kinase</keyword>
<keyword id="KW-0547">Nucleotide-binding</keyword>
<keyword id="KW-0539">Nucleus</keyword>
<keyword id="KW-0597">Phosphoprotein</keyword>
<keyword id="KW-1185">Reference proteome</keyword>
<keyword id="KW-0723">Serine/threonine-protein kinase</keyword>
<keyword id="KW-0804">Transcription</keyword>
<keyword id="KW-0805">Transcription regulation</keyword>
<keyword id="KW-0808">Transferase</keyword>
<gene>
    <name type="primary">Hog1</name>
    <name type="ORF">MYCGRDRAFT_76502</name>
</gene>
<protein>
    <recommendedName>
        <fullName>Mitogen-activated protein kinase Hog1</fullName>
        <shortName>MAP kinase Hog1</shortName>
        <shortName>MgHog1</shortName>
        <ecNumber evidence="2">2.7.11.24</ecNumber>
    </recommendedName>
</protein>
<organism>
    <name type="scientific">Zymoseptoria tritici (strain CBS 115943 / IPO323)</name>
    <name type="common">Speckled leaf blotch fungus</name>
    <name type="synonym">Septoria tritici</name>
    <dbReference type="NCBI Taxonomy" id="336722"/>
    <lineage>
        <taxon>Eukaryota</taxon>
        <taxon>Fungi</taxon>
        <taxon>Dikarya</taxon>
        <taxon>Ascomycota</taxon>
        <taxon>Pezizomycotina</taxon>
        <taxon>Dothideomycetes</taxon>
        <taxon>Dothideomycetidae</taxon>
        <taxon>Mycosphaerellales</taxon>
        <taxon>Mycosphaerellaceae</taxon>
        <taxon>Zymoseptoria</taxon>
    </lineage>
</organism>
<feature type="chain" id="PRO_0000289696" description="Mitogen-activated protein kinase Hog1">
    <location>
        <begin position="1"/>
        <end position="357"/>
    </location>
</feature>
<feature type="domain" description="Protein kinase" evidence="5">
    <location>
        <begin position="20"/>
        <end position="299"/>
    </location>
</feature>
<feature type="short sequence motif" description="TXY">
    <location>
        <begin position="171"/>
        <end position="173"/>
    </location>
</feature>
<feature type="active site" description="Proton acceptor" evidence="5 6">
    <location>
        <position position="141"/>
    </location>
</feature>
<feature type="binding site" evidence="5">
    <location>
        <begin position="26"/>
        <end position="34"/>
    </location>
    <ligand>
        <name>ATP</name>
        <dbReference type="ChEBI" id="CHEBI:30616"/>
    </ligand>
</feature>
<feature type="binding site" evidence="5">
    <location>
        <position position="49"/>
    </location>
    <ligand>
        <name>ATP</name>
        <dbReference type="ChEBI" id="CHEBI:30616"/>
    </ligand>
</feature>
<feature type="modified residue" description="Phosphothreonine" evidence="1">
    <location>
        <position position="171"/>
    </location>
</feature>
<feature type="modified residue" description="Phosphotyrosine" evidence="1">
    <location>
        <position position="173"/>
    </location>
</feature>
<dbReference type="EC" id="2.7.11.24" evidence="2"/>
<dbReference type="EMBL" id="DQ432031">
    <property type="protein sequence ID" value="ABD92790.2"/>
    <property type="molecule type" value="Genomic_DNA"/>
</dbReference>
<dbReference type="EMBL" id="CM001205">
    <property type="protein sequence ID" value="EGP84044.1"/>
    <property type="molecule type" value="Genomic_DNA"/>
</dbReference>
<dbReference type="SMR" id="Q1KTF2"/>
<dbReference type="FunCoup" id="Q1KTF2">
    <property type="interactions" value="555"/>
</dbReference>
<dbReference type="STRING" id="336722.Q1KTF2"/>
<dbReference type="EnsemblFungi" id="Mycgr3T76502">
    <property type="protein sequence ID" value="Mycgr3P76502"/>
    <property type="gene ID" value="Mycgr3G76502"/>
</dbReference>
<dbReference type="KEGG" id="ztr:MYCGRDRAFT_76502"/>
<dbReference type="VEuPathDB" id="FungiDB:ZTRI_10.412"/>
<dbReference type="eggNOG" id="KOG0660">
    <property type="taxonomic scope" value="Eukaryota"/>
</dbReference>
<dbReference type="HOGENOM" id="CLU_000288_181_1_1"/>
<dbReference type="InParanoid" id="Q1KTF2"/>
<dbReference type="OrthoDB" id="192887at2759"/>
<dbReference type="PHI-base" id="PHI:1043"/>
<dbReference type="Proteomes" id="UP000008062">
    <property type="component" value="Chromosome 10"/>
</dbReference>
<dbReference type="GO" id="GO:0005737">
    <property type="term" value="C:cytoplasm"/>
    <property type="evidence" value="ECO:0007669"/>
    <property type="project" value="UniProtKB-SubCell"/>
</dbReference>
<dbReference type="GO" id="GO:0005634">
    <property type="term" value="C:nucleus"/>
    <property type="evidence" value="ECO:0007669"/>
    <property type="project" value="UniProtKB-SubCell"/>
</dbReference>
<dbReference type="GO" id="GO:0005524">
    <property type="term" value="F:ATP binding"/>
    <property type="evidence" value="ECO:0007669"/>
    <property type="project" value="UniProtKB-KW"/>
</dbReference>
<dbReference type="GO" id="GO:0004707">
    <property type="term" value="F:MAP kinase activity"/>
    <property type="evidence" value="ECO:0007669"/>
    <property type="project" value="UniProtKB-EC"/>
</dbReference>
<dbReference type="GO" id="GO:0106310">
    <property type="term" value="F:protein serine kinase activity"/>
    <property type="evidence" value="ECO:0007669"/>
    <property type="project" value="RHEA"/>
</dbReference>
<dbReference type="GO" id="GO:0051403">
    <property type="term" value="P:stress-activated MAPK cascade"/>
    <property type="evidence" value="ECO:0007669"/>
    <property type="project" value="InterPro"/>
</dbReference>
<dbReference type="CDD" id="cd07856">
    <property type="entry name" value="STKc_Sty1_Hog1"/>
    <property type="match status" value="1"/>
</dbReference>
<dbReference type="FunFam" id="1.10.510.10:FF:000049">
    <property type="entry name" value="Mitogen-activated protein kinase"/>
    <property type="match status" value="1"/>
</dbReference>
<dbReference type="FunFam" id="3.30.200.20:FF:000050">
    <property type="entry name" value="Mitogen-activated protein kinase"/>
    <property type="match status" value="1"/>
</dbReference>
<dbReference type="Gene3D" id="3.30.200.20">
    <property type="entry name" value="Phosphorylase Kinase, domain 1"/>
    <property type="match status" value="1"/>
</dbReference>
<dbReference type="Gene3D" id="1.10.510.10">
    <property type="entry name" value="Transferase(Phosphotransferase) domain 1"/>
    <property type="match status" value="1"/>
</dbReference>
<dbReference type="InterPro" id="IPR011009">
    <property type="entry name" value="Kinase-like_dom_sf"/>
</dbReference>
<dbReference type="InterPro" id="IPR050117">
    <property type="entry name" value="MAP_kinase"/>
</dbReference>
<dbReference type="InterPro" id="IPR003527">
    <property type="entry name" value="MAP_kinase_CS"/>
</dbReference>
<dbReference type="InterPro" id="IPR008352">
    <property type="entry name" value="MAPK_p38-like"/>
</dbReference>
<dbReference type="InterPro" id="IPR038783">
    <property type="entry name" value="MAPK_Sty1/Hog1"/>
</dbReference>
<dbReference type="InterPro" id="IPR000719">
    <property type="entry name" value="Prot_kinase_dom"/>
</dbReference>
<dbReference type="InterPro" id="IPR017441">
    <property type="entry name" value="Protein_kinase_ATP_BS"/>
</dbReference>
<dbReference type="InterPro" id="IPR008271">
    <property type="entry name" value="Ser/Thr_kinase_AS"/>
</dbReference>
<dbReference type="PANTHER" id="PTHR24055">
    <property type="entry name" value="MITOGEN-ACTIVATED PROTEIN KINASE"/>
    <property type="match status" value="1"/>
</dbReference>
<dbReference type="Pfam" id="PF00069">
    <property type="entry name" value="Pkinase"/>
    <property type="match status" value="1"/>
</dbReference>
<dbReference type="PRINTS" id="PR01773">
    <property type="entry name" value="P38MAPKINASE"/>
</dbReference>
<dbReference type="SMART" id="SM00220">
    <property type="entry name" value="S_TKc"/>
    <property type="match status" value="1"/>
</dbReference>
<dbReference type="SUPFAM" id="SSF56112">
    <property type="entry name" value="Protein kinase-like (PK-like)"/>
    <property type="match status" value="1"/>
</dbReference>
<dbReference type="PROSITE" id="PS01351">
    <property type="entry name" value="MAPK"/>
    <property type="match status" value="1"/>
</dbReference>
<dbReference type="PROSITE" id="PS00107">
    <property type="entry name" value="PROTEIN_KINASE_ATP"/>
    <property type="match status" value="1"/>
</dbReference>
<dbReference type="PROSITE" id="PS50011">
    <property type="entry name" value="PROTEIN_KINASE_DOM"/>
    <property type="match status" value="1"/>
</dbReference>
<dbReference type="PROSITE" id="PS00108">
    <property type="entry name" value="PROTEIN_KINASE_ST"/>
    <property type="match status" value="1"/>
</dbReference>
<sequence length="357" mass="40768">MAEFVRAQIFGTTFEITSRYTDLQPVGMGAFGLVCSAKDQLTGQAVAVKKIMKPFSTPVLSKRTYRELKLLKHLKHENVISLSDIFISPLEDIYFVTELLGTDLHRLLTSRPLEKQFIQYFLYQILRGLKYVHSAGVVHRDLKPSNILVNENCDLKICDFGLARIQDPQMTGYVSTRYYRAPEIMLTWQKYDVEVDIWSAGCIFAEMLEGKPLFPGKDHVNQFSIITDLLGTPPDDVISTICSENTLRFVQSLPKRERQPLKNKFKNADPQAIELLERMLVFDPRKRVKAGEALADPYLSPYHDPTDEPEAEEKFDWSFNDADLPVDTWKIMMYSEILDYHNVDSANNGEGQENGGA</sequence>
<reference key="1">
    <citation type="journal article" date="2006" name="Mol. Plant Microbe Interact.">
        <title>MgHog1 regulates dimorphism and pathogenicity in the fungal wheat pathogen Mycosphaerella graminicola.</title>
        <authorList>
            <person name="Mehrabi R."/>
            <person name="Zwiers L.H."/>
            <person name="de Waard M.A."/>
            <person name="Kema G.H."/>
        </authorList>
    </citation>
    <scope>NUCLEOTIDE SEQUENCE [GENOMIC DNA]</scope>
    <scope>FUNCTION</scope>
    <source>
        <strain>CBS 115943 / IPO323</strain>
    </source>
</reference>
<reference key="2">
    <citation type="journal article" date="2011" name="PLoS Genet.">
        <title>Finished genome of the fungal wheat pathogen Mycosphaerella graminicola reveals dispensome structure, chromosome plasticity, and stealth pathogenesis.</title>
        <authorList>
            <person name="Goodwin S.B."/>
            <person name="Ben M'barek S."/>
            <person name="Dhillon B."/>
            <person name="Wittenberg A.H.J."/>
            <person name="Crane C.F."/>
            <person name="Hane J.K."/>
            <person name="Foster A.J."/>
            <person name="Van der Lee T.A.J."/>
            <person name="Grimwood J."/>
            <person name="Aerts A."/>
            <person name="Antoniw J."/>
            <person name="Bailey A."/>
            <person name="Bluhm B."/>
            <person name="Bowler J."/>
            <person name="Bristow J."/>
            <person name="van der Burgt A."/>
            <person name="Canto-Canche B."/>
            <person name="Churchill A.C.L."/>
            <person name="Conde-Ferraez L."/>
            <person name="Cools H.J."/>
            <person name="Coutinho P.M."/>
            <person name="Csukai M."/>
            <person name="Dehal P."/>
            <person name="De Wit P."/>
            <person name="Donzelli B."/>
            <person name="van de Geest H.C."/>
            <person name="van Ham R.C.H.J."/>
            <person name="Hammond-Kosack K.E."/>
            <person name="Henrissat B."/>
            <person name="Kilian A."/>
            <person name="Kobayashi A.K."/>
            <person name="Koopmann E."/>
            <person name="Kourmpetis Y."/>
            <person name="Kuzniar A."/>
            <person name="Lindquist E."/>
            <person name="Lombard V."/>
            <person name="Maliepaard C."/>
            <person name="Martins N."/>
            <person name="Mehrabi R."/>
            <person name="Nap J.P.H."/>
            <person name="Ponomarenko A."/>
            <person name="Rudd J.J."/>
            <person name="Salamov A."/>
            <person name="Schmutz J."/>
            <person name="Schouten H.J."/>
            <person name="Shapiro H."/>
            <person name="Stergiopoulos I."/>
            <person name="Torriani S.F.F."/>
            <person name="Tu H."/>
            <person name="de Vries R.P."/>
            <person name="Waalwijk C."/>
            <person name="Ware S.B."/>
            <person name="Wiebenga A."/>
            <person name="Zwiers L.-H."/>
            <person name="Oliver R.P."/>
            <person name="Grigoriev I.V."/>
            <person name="Kema G.H.J."/>
        </authorList>
    </citation>
    <scope>NUCLEOTIDE SEQUENCE [LARGE SCALE GENOMIC DNA]</scope>
    <source>
        <strain>CBS 115943 / IPO323</strain>
    </source>
</reference>